<evidence type="ECO:0000250" key="1"/>
<evidence type="ECO:0000255" key="2">
    <source>
        <dbReference type="PROSITE-ProRule" id="PRU00609"/>
    </source>
</evidence>
<evidence type="ECO:0000305" key="3"/>
<reference key="1">
    <citation type="journal article" date="2005" name="Genome Res.">
        <title>Sequence, annotation, and analysis of synteny between rice chromosome 3 and diverged grass species.</title>
        <authorList>
            <consortium name="The rice chromosome 3 sequencing consortium"/>
            <person name="Buell C.R."/>
            <person name="Yuan Q."/>
            <person name="Ouyang S."/>
            <person name="Liu J."/>
            <person name="Zhu W."/>
            <person name="Wang A."/>
            <person name="Maiti R."/>
            <person name="Haas B."/>
            <person name="Wortman J."/>
            <person name="Pertea M."/>
            <person name="Jones K.M."/>
            <person name="Kim M."/>
            <person name="Overton L."/>
            <person name="Tsitrin T."/>
            <person name="Fadrosh D."/>
            <person name="Bera J."/>
            <person name="Weaver B."/>
            <person name="Jin S."/>
            <person name="Johri S."/>
            <person name="Reardon M."/>
            <person name="Webb K."/>
            <person name="Hill J."/>
            <person name="Moffat K."/>
            <person name="Tallon L."/>
            <person name="Van Aken S."/>
            <person name="Lewis M."/>
            <person name="Utterback T."/>
            <person name="Feldblyum T."/>
            <person name="Zismann V."/>
            <person name="Iobst S."/>
            <person name="Hsiao J."/>
            <person name="de Vazeille A.R."/>
            <person name="Salzberg S.L."/>
            <person name="White O."/>
            <person name="Fraser C.M."/>
            <person name="Yu Y."/>
            <person name="Kim H."/>
            <person name="Rambo T."/>
            <person name="Currie J."/>
            <person name="Collura K."/>
            <person name="Kernodle-Thompson S."/>
            <person name="Wei F."/>
            <person name="Kudrna K."/>
            <person name="Ammiraju J.S.S."/>
            <person name="Luo M."/>
            <person name="Goicoechea J.L."/>
            <person name="Wing R.A."/>
            <person name="Henry D."/>
            <person name="Oates R."/>
            <person name="Palmer M."/>
            <person name="Pries G."/>
            <person name="Saski C."/>
            <person name="Simmons J."/>
            <person name="Soderlund C."/>
            <person name="Nelson W."/>
            <person name="de la Bastide M."/>
            <person name="Spiegel L."/>
            <person name="Nascimento L."/>
            <person name="Huang E."/>
            <person name="Preston R."/>
            <person name="Zutavern T."/>
            <person name="Palmer L."/>
            <person name="O'Shaughnessy A."/>
            <person name="Dike S."/>
            <person name="McCombie W.R."/>
            <person name="Minx P."/>
            <person name="Cordum H."/>
            <person name="Wilson R."/>
            <person name="Jin W."/>
            <person name="Lee H.R."/>
            <person name="Jiang J."/>
            <person name="Jackson S."/>
        </authorList>
    </citation>
    <scope>NUCLEOTIDE SEQUENCE [LARGE SCALE GENOMIC DNA]</scope>
    <source>
        <strain>cv. Nipponbare</strain>
    </source>
</reference>
<reference key="2">
    <citation type="journal article" date="2005" name="Nature">
        <title>The map-based sequence of the rice genome.</title>
        <authorList>
            <consortium name="International rice genome sequencing project (IRGSP)"/>
        </authorList>
    </citation>
    <scope>NUCLEOTIDE SEQUENCE [LARGE SCALE GENOMIC DNA]</scope>
    <source>
        <strain>cv. Nipponbare</strain>
    </source>
</reference>
<reference key="3">
    <citation type="journal article" date="2008" name="Nucleic Acids Res.">
        <title>The rice annotation project database (RAP-DB): 2008 update.</title>
        <authorList>
            <consortium name="The rice annotation project (RAP)"/>
        </authorList>
    </citation>
    <scope>GENOME REANNOTATION</scope>
    <source>
        <strain>cv. Nipponbare</strain>
    </source>
</reference>
<reference key="4">
    <citation type="journal article" date="2013" name="Rice">
        <title>Improvement of the Oryza sativa Nipponbare reference genome using next generation sequence and optical map data.</title>
        <authorList>
            <person name="Kawahara Y."/>
            <person name="de la Bastide M."/>
            <person name="Hamilton J.P."/>
            <person name="Kanamori H."/>
            <person name="McCombie W.R."/>
            <person name="Ouyang S."/>
            <person name="Schwartz D.C."/>
            <person name="Tanaka T."/>
            <person name="Wu J."/>
            <person name="Zhou S."/>
            <person name="Childs K.L."/>
            <person name="Davidson R.M."/>
            <person name="Lin H."/>
            <person name="Quesada-Ocampo L."/>
            <person name="Vaillancourt B."/>
            <person name="Sakai H."/>
            <person name="Lee S.S."/>
            <person name="Kim J."/>
            <person name="Numa H."/>
            <person name="Itoh T."/>
            <person name="Buell C.R."/>
            <person name="Matsumoto T."/>
        </authorList>
    </citation>
    <scope>GENOME REANNOTATION</scope>
    <source>
        <strain>cv. Nipponbare</strain>
    </source>
</reference>
<reference key="5">
    <citation type="submission" date="2008-11" db="EMBL/GenBank/DDBJ databases">
        <title>Oryza sativa full length cDNA.</title>
        <authorList>
            <consortium name="The rice full-length cDNA consortium"/>
        </authorList>
    </citation>
    <scope>NUCLEOTIDE SEQUENCE [LARGE SCALE MRNA]</scope>
    <source>
        <strain>cv. Nipponbare</strain>
    </source>
</reference>
<name>ASNS1_ORYSJ</name>
<organism>
    <name type="scientific">Oryza sativa subsp. japonica</name>
    <name type="common">Rice</name>
    <dbReference type="NCBI Taxonomy" id="39947"/>
    <lineage>
        <taxon>Eukaryota</taxon>
        <taxon>Viridiplantae</taxon>
        <taxon>Streptophyta</taxon>
        <taxon>Embryophyta</taxon>
        <taxon>Tracheophyta</taxon>
        <taxon>Spermatophyta</taxon>
        <taxon>Magnoliopsida</taxon>
        <taxon>Liliopsida</taxon>
        <taxon>Poales</taxon>
        <taxon>Poaceae</taxon>
        <taxon>BOP clade</taxon>
        <taxon>Oryzoideae</taxon>
        <taxon>Oryzeae</taxon>
        <taxon>Oryzinae</taxon>
        <taxon>Oryza</taxon>
        <taxon>Oryza sativa</taxon>
    </lineage>
</organism>
<keyword id="KW-0028">Amino-acid biosynthesis</keyword>
<keyword id="KW-0061">Asparagine biosynthesis</keyword>
<keyword id="KW-0067">ATP-binding</keyword>
<keyword id="KW-0315">Glutamine amidotransferase</keyword>
<keyword id="KW-0436">Ligase</keyword>
<keyword id="KW-0547">Nucleotide-binding</keyword>
<keyword id="KW-1185">Reference proteome</keyword>
<comment type="function">
    <text evidence="1">Essential for nitrogen assimilation, distribution and remobilization within the plant via the phloem.</text>
</comment>
<comment type="catalytic activity">
    <reaction>
        <text>L-aspartate + L-glutamine + ATP + H2O = L-asparagine + L-glutamate + AMP + diphosphate + H(+)</text>
        <dbReference type="Rhea" id="RHEA:12228"/>
        <dbReference type="ChEBI" id="CHEBI:15377"/>
        <dbReference type="ChEBI" id="CHEBI:15378"/>
        <dbReference type="ChEBI" id="CHEBI:29985"/>
        <dbReference type="ChEBI" id="CHEBI:29991"/>
        <dbReference type="ChEBI" id="CHEBI:30616"/>
        <dbReference type="ChEBI" id="CHEBI:33019"/>
        <dbReference type="ChEBI" id="CHEBI:58048"/>
        <dbReference type="ChEBI" id="CHEBI:58359"/>
        <dbReference type="ChEBI" id="CHEBI:456215"/>
        <dbReference type="EC" id="6.3.5.4"/>
    </reaction>
</comment>
<comment type="pathway">
    <text>Amino-acid biosynthesis; L-asparagine biosynthesis.</text>
</comment>
<comment type="sequence caution" evidence="3">
    <conflict type="erroneous gene model prediction">
        <sequence resource="EMBL-CDS" id="BAF11713"/>
    </conflict>
</comment>
<gene>
    <name type="ordered locus">Os03g0291500</name>
    <name type="ordered locus">LOC_Os03g18130</name>
</gene>
<accession>Q10MX3</accession>
<accession>A0A0P0VX10</accession>
<accession>Q0DSS5</accession>
<dbReference type="EC" id="6.3.5.4"/>
<dbReference type="EMBL" id="AC137634">
    <property type="status" value="NOT_ANNOTATED_CDS"/>
    <property type="molecule type" value="Genomic_DNA"/>
</dbReference>
<dbReference type="EMBL" id="DP000009">
    <property type="protein sequence ID" value="ABF95401.1"/>
    <property type="molecule type" value="Genomic_DNA"/>
</dbReference>
<dbReference type="EMBL" id="AP008209">
    <property type="protein sequence ID" value="BAF11713.2"/>
    <property type="status" value="ALT_SEQ"/>
    <property type="molecule type" value="Genomic_DNA"/>
</dbReference>
<dbReference type="EMBL" id="AP014959">
    <property type="protein sequence ID" value="BAS83672.1"/>
    <property type="molecule type" value="Genomic_DNA"/>
</dbReference>
<dbReference type="EMBL" id="AK318591">
    <property type="status" value="NOT_ANNOTATED_CDS"/>
    <property type="molecule type" value="mRNA"/>
</dbReference>
<dbReference type="RefSeq" id="XP_015632089.1">
    <property type="nucleotide sequence ID" value="XM_015776603.1"/>
</dbReference>
<dbReference type="SMR" id="Q10MX3"/>
<dbReference type="FunCoup" id="Q10MX3">
    <property type="interactions" value="911"/>
</dbReference>
<dbReference type="STRING" id="39947.Q10MX3"/>
<dbReference type="PaxDb" id="39947-Q10MX3"/>
<dbReference type="EnsemblPlants" id="Os03t0291500-01">
    <property type="protein sequence ID" value="Os03t0291500-01"/>
    <property type="gene ID" value="Os03g0291500"/>
</dbReference>
<dbReference type="Gramene" id="Os03t0291500-01">
    <property type="protein sequence ID" value="Os03t0291500-01"/>
    <property type="gene ID" value="Os03g0291500"/>
</dbReference>
<dbReference type="KEGG" id="dosa:Os03g0291500"/>
<dbReference type="eggNOG" id="KOG0571">
    <property type="taxonomic scope" value="Eukaryota"/>
</dbReference>
<dbReference type="HOGENOM" id="CLU_014658_2_2_1"/>
<dbReference type="InParanoid" id="Q10MX3"/>
<dbReference type="OMA" id="QFASKHT"/>
<dbReference type="OrthoDB" id="409189at2759"/>
<dbReference type="BRENDA" id="6.3.5.4">
    <property type="organism ID" value="8948"/>
</dbReference>
<dbReference type="PlantReactome" id="R-OSA-1119354">
    <property type="pathway name" value="Asparagine biosynthesis III"/>
</dbReference>
<dbReference type="PlantReactome" id="R-OSA-1119553">
    <property type="pathway name" value="Asparagine biosynthesis"/>
</dbReference>
<dbReference type="UniPathway" id="UPA00134"/>
<dbReference type="Proteomes" id="UP000000763">
    <property type="component" value="Chromosome 3"/>
</dbReference>
<dbReference type="Proteomes" id="UP000059680">
    <property type="component" value="Chromosome 3"/>
</dbReference>
<dbReference type="GO" id="GO:0005829">
    <property type="term" value="C:cytosol"/>
    <property type="evidence" value="ECO:0000318"/>
    <property type="project" value="GO_Central"/>
</dbReference>
<dbReference type="GO" id="GO:0004066">
    <property type="term" value="F:asparagine synthase (glutamine-hydrolyzing) activity"/>
    <property type="evidence" value="ECO:0000318"/>
    <property type="project" value="GO_Central"/>
</dbReference>
<dbReference type="GO" id="GO:0005524">
    <property type="term" value="F:ATP binding"/>
    <property type="evidence" value="ECO:0007669"/>
    <property type="project" value="UniProtKB-KW"/>
</dbReference>
<dbReference type="GO" id="GO:0006529">
    <property type="term" value="P:asparagine biosynthetic process"/>
    <property type="evidence" value="ECO:0000318"/>
    <property type="project" value="GO_Central"/>
</dbReference>
<dbReference type="GO" id="GO:0070981">
    <property type="term" value="P:L-asparagine biosynthetic process"/>
    <property type="evidence" value="ECO:0007669"/>
    <property type="project" value="UniProtKB-UniPathway"/>
</dbReference>
<dbReference type="CDD" id="cd01991">
    <property type="entry name" value="Asn_synthase_B_C"/>
    <property type="match status" value="1"/>
</dbReference>
<dbReference type="CDD" id="cd00712">
    <property type="entry name" value="AsnB"/>
    <property type="match status" value="1"/>
</dbReference>
<dbReference type="FunFam" id="3.40.50.620:FF:000055">
    <property type="entry name" value="Asparagine synthetase [glutamine-hydrolyzing]"/>
    <property type="match status" value="1"/>
</dbReference>
<dbReference type="FunFam" id="3.60.20.10:FF:000024">
    <property type="entry name" value="Asparagine synthetase [glutamine-hydrolyzing]"/>
    <property type="match status" value="1"/>
</dbReference>
<dbReference type="Gene3D" id="3.60.20.10">
    <property type="entry name" value="Glutamine Phosphoribosylpyrophosphate, subunit 1, domain 1"/>
    <property type="match status" value="1"/>
</dbReference>
<dbReference type="Gene3D" id="3.40.50.620">
    <property type="entry name" value="HUPs"/>
    <property type="match status" value="1"/>
</dbReference>
<dbReference type="InterPro" id="IPR006426">
    <property type="entry name" value="Asn_synth_AEB"/>
</dbReference>
<dbReference type="InterPro" id="IPR001962">
    <property type="entry name" value="Asn_synthase"/>
</dbReference>
<dbReference type="InterPro" id="IPR050795">
    <property type="entry name" value="Asn_Synthetase"/>
</dbReference>
<dbReference type="InterPro" id="IPR033738">
    <property type="entry name" value="AsnB_N"/>
</dbReference>
<dbReference type="InterPro" id="IPR017932">
    <property type="entry name" value="GATase_2_dom"/>
</dbReference>
<dbReference type="InterPro" id="IPR029055">
    <property type="entry name" value="Ntn_hydrolases_N"/>
</dbReference>
<dbReference type="InterPro" id="IPR014729">
    <property type="entry name" value="Rossmann-like_a/b/a_fold"/>
</dbReference>
<dbReference type="NCBIfam" id="TIGR01536">
    <property type="entry name" value="asn_synth_AEB"/>
    <property type="match status" value="1"/>
</dbReference>
<dbReference type="NCBIfam" id="NF006949">
    <property type="entry name" value="PRK09431.1"/>
    <property type="match status" value="1"/>
</dbReference>
<dbReference type="PANTHER" id="PTHR11772">
    <property type="entry name" value="ASPARAGINE SYNTHETASE"/>
    <property type="match status" value="1"/>
</dbReference>
<dbReference type="PANTHER" id="PTHR11772:SF16">
    <property type="entry name" value="ASPARAGINE SYNTHETASE [GLUTAMINE-HYDROLYZING] 1"/>
    <property type="match status" value="1"/>
</dbReference>
<dbReference type="Pfam" id="PF00733">
    <property type="entry name" value="Asn_synthase"/>
    <property type="match status" value="1"/>
</dbReference>
<dbReference type="Pfam" id="PF13537">
    <property type="entry name" value="GATase_7"/>
    <property type="match status" value="1"/>
</dbReference>
<dbReference type="PIRSF" id="PIRSF001589">
    <property type="entry name" value="Asn_synthetase_glu-h"/>
    <property type="match status" value="1"/>
</dbReference>
<dbReference type="SUPFAM" id="SSF52402">
    <property type="entry name" value="Adenine nucleotide alpha hydrolases-like"/>
    <property type="match status" value="1"/>
</dbReference>
<dbReference type="SUPFAM" id="SSF56235">
    <property type="entry name" value="N-terminal nucleophile aminohydrolases (Ntn hydrolases)"/>
    <property type="match status" value="1"/>
</dbReference>
<dbReference type="PROSITE" id="PS51278">
    <property type="entry name" value="GATASE_TYPE_2"/>
    <property type="match status" value="1"/>
</dbReference>
<proteinExistence type="evidence at transcript level"/>
<protein>
    <recommendedName>
        <fullName>Asparagine synthetase [glutamine-hydrolyzing] 1</fullName>
        <ecNumber>6.3.5.4</ecNumber>
    </recommendedName>
    <alternativeName>
        <fullName>Glutamine-dependent asparagine synthetase 1</fullName>
    </alternativeName>
</protein>
<sequence>MCGILAVLGAADWSQAKRAHVLSCSRRLKHRGPDWSGLYQCEGNFLAQQRLAIVSPLSGDQPLYNADRTIVVVANGEIYNHKKIRKQFASKHTFSTGSDCEVIIPLYEEYGEDFVDMLDGVFAFVLYDTRTKTYMAARDAIGVNPLYIGRGSDGAVWISSEMKALNEDCVEFEIFPPGHLYSSAAGGLRRWYKPQWFAENVPATPYQPLLLREAFEKAVIKRLMTDVPFGVLLSGGLDSSLVAAVTKRHLIKTEAAEKFGAELHSFVVGLEGSPDLIAAREVADHLGTIHHEFHFTVQDGIDAIEEVIYHDETYDVTTIRASTPMFLMARKIKALGVKMVLSGEGSDELLGGYLYFHFAPNKEEFHKETCRKVKALHQYDCLRANKATSAWGLEVRVPFLDKEFINVAMSMDPEWKMYNADLGRIEKWVMRKAFDDEEHPYLPKHILYRQKEQFSDGVGYNWIDGLKAFTEQQVSDEMMKNAAKVYPHNTPVNKEAYYYRMIFERLFPQESARETVPWGPSIACSTPAAIEWVEQWKASHDPSGRLIASHNSASASANHTNHANANANGNSNGKANGNCAMAANGTNGVGLVVANGTANGKMEA</sequence>
<feature type="initiator methionine" description="Removed" evidence="1">
    <location>
        <position position="1"/>
    </location>
</feature>
<feature type="chain" id="PRO_0000420842" description="Asparagine synthetase [glutamine-hydrolyzing] 1">
    <location>
        <begin position="2"/>
        <end position="604"/>
    </location>
</feature>
<feature type="domain" description="Glutamine amidotransferase type-2" evidence="2">
    <location>
        <begin position="2"/>
        <end position="186"/>
    </location>
</feature>
<feature type="domain" description="Asparagine synthetase">
    <location>
        <begin position="211"/>
        <end position="451"/>
    </location>
</feature>
<feature type="active site" description="Nucleophile" evidence="2">
    <location>
        <position position="2"/>
    </location>
</feature>
<feature type="binding site" evidence="1">
    <location>
        <begin position="50"/>
        <end position="54"/>
    </location>
    <ligand>
        <name>L-glutamine</name>
        <dbReference type="ChEBI" id="CHEBI:58359"/>
    </ligand>
</feature>
<feature type="binding site" evidence="1">
    <location>
        <begin position="75"/>
        <end position="77"/>
    </location>
    <ligand>
        <name>L-glutamine</name>
        <dbReference type="ChEBI" id="CHEBI:58359"/>
    </ligand>
</feature>
<feature type="binding site" evidence="1">
    <location>
        <position position="99"/>
    </location>
    <ligand>
        <name>L-glutamine</name>
        <dbReference type="ChEBI" id="CHEBI:58359"/>
    </ligand>
</feature>
<feature type="binding site" evidence="1">
    <location>
        <position position="232"/>
    </location>
    <ligand>
        <name>ATP</name>
        <dbReference type="ChEBI" id="CHEBI:30616"/>
    </ligand>
</feature>
<feature type="binding site" evidence="1">
    <location>
        <position position="268"/>
    </location>
    <ligand>
        <name>ATP</name>
        <dbReference type="ChEBI" id="CHEBI:30616"/>
    </ligand>
</feature>
<feature type="binding site" evidence="1">
    <location>
        <begin position="342"/>
        <end position="343"/>
    </location>
    <ligand>
        <name>ATP</name>
        <dbReference type="ChEBI" id="CHEBI:30616"/>
    </ligand>
</feature>
<feature type="site" description="Important for beta-aspartyl-AMP intermediate formation" evidence="1">
    <location>
        <position position="344"/>
    </location>
</feature>